<proteinExistence type="inferred from homology"/>
<feature type="initiator methionine" description="Removed; by host" evidence="1">
    <location>
        <position position="1"/>
    </location>
</feature>
<feature type="chain" id="PRO_0000115934" description="Cytoplasmic envelopment protein 3" evidence="1">
    <location>
        <begin position="2"/>
        <end position="66"/>
    </location>
</feature>
<feature type="lipid moiety-binding region" description="N-myristoyl glycine; by host" evidence="1">
    <location>
        <position position="2"/>
    </location>
</feature>
<keyword id="KW-1032">Host cell membrane</keyword>
<keyword id="KW-1040">Host Golgi apparatus</keyword>
<keyword id="KW-1043">Host membrane</keyword>
<keyword id="KW-0449">Lipoprotein</keyword>
<keyword id="KW-0472">Membrane</keyword>
<keyword id="KW-0519">Myristate</keyword>
<keyword id="KW-0564">Palmitate</keyword>
<keyword id="KW-0597">Phosphoprotein</keyword>
<keyword id="KW-1185">Reference proteome</keyword>
<keyword id="KW-0946">Virion</keyword>
<keyword id="KW-0920">Virion tegument</keyword>
<comment type="function">
    <text evidence="1">Plays an important role in the cytoplasmic envelopment of tegument proteins and capsids during the assembly and egress processes. Also participates in viral entry at the fusion step probably by regulating the core fusion machinery.</text>
</comment>
<comment type="subunit">
    <text evidence="1">Interacts with cytoplasmic envelopment protein 2; this interaction is essential for the proper localization of each protein to the assembly complex and thus for the production of infectious virus.</text>
</comment>
<comment type="subcellular location">
    <subcellularLocation>
        <location evidence="1">Virion tegument</location>
    </subcellularLocation>
    <subcellularLocation>
        <location evidence="1">Virion membrane</location>
        <topology evidence="1">Lipid-anchor</topology>
    </subcellularLocation>
    <subcellularLocation>
        <location evidence="1">Host cell membrane</location>
        <topology evidence="1">Lipid-anchor</topology>
        <orientation evidence="1">Cytoplasmic side</orientation>
    </subcellularLocation>
    <subcellularLocation>
        <location evidence="1">Host Golgi apparatus membrane</location>
        <topology evidence="1">Lipid-anchor</topology>
        <orientation evidence="1">Cytoplasmic side</orientation>
    </subcellularLocation>
    <text evidence="1">Virion membrane-associated tegument protein. Associates with host membrane lipids rafts. During virion morphogenesis, this protein probably accumulates in the endosomes and trans-Golgi where secondary envelopment occurs. It is probably transported to the cell surface from where it is endocytosed and directed to the trans-Golgi network (TGN).</text>
</comment>
<comment type="PTM">
    <text evidence="1">Phosphorylated. Phosphorylation does not seem to be required for recycling to the host Golgi apparatus. Packaging is selective for underphosphorylated forms.</text>
</comment>
<comment type="similarity">
    <text evidence="1">Belongs to the herpesviridae cytoplasmic envelopment protein 3 family.</text>
</comment>
<organism>
    <name type="scientific">Saimiriine herpesvirus 2 (strain 11)</name>
    <name type="common">SaHV-2</name>
    <name type="synonym">Herpesvirus saimiri</name>
    <dbReference type="NCBI Taxonomy" id="10383"/>
    <lineage>
        <taxon>Viruses</taxon>
        <taxon>Duplodnaviria</taxon>
        <taxon>Heunggongvirae</taxon>
        <taxon>Peploviricota</taxon>
        <taxon>Herviviricetes</taxon>
        <taxon>Herpesvirales</taxon>
        <taxon>Orthoherpesviridae</taxon>
        <taxon>Gammaherpesvirinae</taxon>
        <taxon>Rhadinovirus</taxon>
        <taxon>Rhadinovirus saimiriinegamma2</taxon>
        <taxon>Saimiriine herpesvirus 2</taxon>
    </lineage>
</organism>
<reference key="1">
    <citation type="journal article" date="1992" name="J. Virol.">
        <title>Primary structure of the herpesvirus saimiri genome.</title>
        <authorList>
            <person name="Albrecht J.-C."/>
            <person name="Nicholas J."/>
            <person name="Biller D."/>
            <person name="Cameron K.R."/>
            <person name="Biesinger B."/>
            <person name="Newman C."/>
            <person name="Wittmann S."/>
            <person name="Craxton M.A."/>
            <person name="Coleman H."/>
            <person name="Fleckenstein B."/>
            <person name="Honess R.W."/>
        </authorList>
    </citation>
    <scope>NUCLEOTIDE SEQUENCE [LARGE SCALE GENOMIC DNA]</scope>
</reference>
<protein>
    <recommendedName>
        <fullName evidence="1">Cytoplasmic envelopment protein 3</fullName>
    </recommendedName>
</protein>
<accession>Q01025</accession>
<sequence>MGTLCSVCKRRPNPVDTEGKVINVTDDFEEMSETEIMLACPQDKKLCKKPKESMYKTKHKSNKHGI</sequence>
<gene>
    <name type="primary">38</name>
</gene>
<name>CEP3_SHV21</name>
<dbReference type="EMBL" id="X64346">
    <property type="protein sequence ID" value="CAA45661.1"/>
    <property type="molecule type" value="Genomic_DNA"/>
</dbReference>
<dbReference type="RefSeq" id="NP_040240.1">
    <property type="nucleotide sequence ID" value="NC_001350.1"/>
</dbReference>
<dbReference type="KEGG" id="vg:1682453"/>
<dbReference type="Proteomes" id="UP000000587">
    <property type="component" value="Segment"/>
</dbReference>
<dbReference type="GO" id="GO:0044178">
    <property type="term" value="C:host cell Golgi membrane"/>
    <property type="evidence" value="ECO:0007669"/>
    <property type="project" value="UniProtKB-SubCell"/>
</dbReference>
<dbReference type="GO" id="GO:0020002">
    <property type="term" value="C:host cell plasma membrane"/>
    <property type="evidence" value="ECO:0007669"/>
    <property type="project" value="UniProtKB-SubCell"/>
</dbReference>
<dbReference type="GO" id="GO:0016020">
    <property type="term" value="C:membrane"/>
    <property type="evidence" value="ECO:0007669"/>
    <property type="project" value="UniProtKB-KW"/>
</dbReference>
<dbReference type="GO" id="GO:0019033">
    <property type="term" value="C:viral tegument"/>
    <property type="evidence" value="ECO:0007669"/>
    <property type="project" value="UniProtKB-SubCell"/>
</dbReference>
<dbReference type="GO" id="GO:0055036">
    <property type="term" value="C:virion membrane"/>
    <property type="evidence" value="ECO:0007669"/>
    <property type="project" value="UniProtKB-SubCell"/>
</dbReference>
<dbReference type="GO" id="GO:0046760">
    <property type="term" value="P:viral budding from Golgi membrane"/>
    <property type="evidence" value="ECO:0007669"/>
    <property type="project" value="UniProtKB-UniRule"/>
</dbReference>
<dbReference type="HAMAP" id="MF_04042">
    <property type="entry name" value="HSV_CEP3_gammahv"/>
    <property type="match status" value="1"/>
</dbReference>
<dbReference type="InterPro" id="IPR024360">
    <property type="entry name" value="Herpesvirus_CEP3"/>
</dbReference>
<dbReference type="Pfam" id="PF10813">
    <property type="entry name" value="Herpesvir_UL11"/>
    <property type="match status" value="1"/>
</dbReference>
<evidence type="ECO:0000255" key="1">
    <source>
        <dbReference type="HAMAP-Rule" id="MF_04042"/>
    </source>
</evidence>
<organismHost>
    <name type="scientific">Saimiri sciureus</name>
    <name type="common">Common squirrel monkey</name>
    <dbReference type="NCBI Taxonomy" id="9521"/>
</organismHost>